<feature type="chain" id="PRO_0000398200" description="Propionate kinase">
    <location>
        <begin position="1"/>
        <end position="404"/>
    </location>
</feature>
<feature type="strand" evidence="4">
    <location>
        <begin position="3"/>
        <end position="11"/>
    </location>
</feature>
<feature type="strand" evidence="4">
    <location>
        <begin position="14"/>
        <end position="22"/>
    </location>
</feature>
<feature type="turn" evidence="4">
    <location>
        <begin position="23"/>
        <end position="25"/>
    </location>
</feature>
<feature type="strand" evidence="4">
    <location>
        <begin position="26"/>
        <end position="35"/>
    </location>
</feature>
<feature type="strand" evidence="5">
    <location>
        <begin position="37"/>
        <end position="40"/>
    </location>
</feature>
<feature type="strand" evidence="4">
    <location>
        <begin position="42"/>
        <end position="46"/>
    </location>
</feature>
<feature type="strand" evidence="4">
    <location>
        <begin position="51"/>
        <end position="55"/>
    </location>
</feature>
<feature type="helix" evidence="4">
    <location>
        <begin position="61"/>
        <end position="74"/>
    </location>
</feature>
<feature type="helix" evidence="4">
    <location>
        <begin position="81"/>
        <end position="83"/>
    </location>
</feature>
<feature type="strand" evidence="4">
    <location>
        <begin position="84"/>
        <end position="92"/>
    </location>
</feature>
<feature type="turn" evidence="4">
    <location>
        <begin position="95"/>
        <end position="97"/>
    </location>
</feature>
<feature type="helix" evidence="4">
    <location>
        <begin position="106"/>
        <end position="114"/>
    </location>
</feature>
<feature type="helix" evidence="4">
    <location>
        <begin position="115"/>
        <end position="117"/>
    </location>
</feature>
<feature type="turn" evidence="4">
    <location>
        <begin position="120"/>
        <end position="122"/>
    </location>
</feature>
<feature type="helix" evidence="4">
    <location>
        <begin position="123"/>
        <end position="136"/>
    </location>
</feature>
<feature type="strand" evidence="4">
    <location>
        <begin position="142"/>
        <end position="146"/>
    </location>
</feature>
<feature type="helix" evidence="4">
    <location>
        <begin position="149"/>
        <end position="153"/>
    </location>
</feature>
<feature type="helix" evidence="4">
    <location>
        <begin position="156"/>
        <end position="159"/>
    </location>
</feature>
<feature type="helix" evidence="4">
    <location>
        <begin position="165"/>
        <end position="169"/>
    </location>
</feature>
<feature type="helix" evidence="4">
    <location>
        <begin position="180"/>
        <end position="194"/>
    </location>
</feature>
<feature type="helix" evidence="4">
    <location>
        <begin position="198"/>
        <end position="200"/>
    </location>
</feature>
<feature type="strand" evidence="4">
    <location>
        <begin position="202"/>
        <end position="218"/>
    </location>
</feature>
<feature type="strand" evidence="4">
    <location>
        <begin position="221"/>
        <end position="226"/>
    </location>
</feature>
<feature type="helix" evidence="4">
    <location>
        <begin position="248"/>
        <end position="256"/>
    </location>
</feature>
<feature type="helix" evidence="4">
    <location>
        <begin position="260"/>
        <end position="269"/>
    </location>
</feature>
<feature type="helix" evidence="4">
    <location>
        <begin position="272"/>
        <end position="277"/>
    </location>
</feature>
<feature type="helix" evidence="4">
    <location>
        <begin position="283"/>
        <end position="291"/>
    </location>
</feature>
<feature type="helix" evidence="4">
    <location>
        <begin position="295"/>
        <end position="319"/>
    </location>
</feature>
<feature type="strand" evidence="4">
    <location>
        <begin position="323"/>
        <end position="328"/>
    </location>
</feature>
<feature type="helix" evidence="4">
    <location>
        <begin position="329"/>
        <end position="334"/>
    </location>
</feature>
<feature type="helix" evidence="4">
    <location>
        <begin position="336"/>
        <end position="343"/>
    </location>
</feature>
<feature type="helix" evidence="4">
    <location>
        <begin position="347"/>
        <end position="349"/>
    </location>
</feature>
<feature type="helix" evidence="4">
    <location>
        <begin position="355"/>
        <end position="359"/>
    </location>
</feature>
<feature type="strand" evidence="4">
    <location>
        <begin position="371"/>
        <end position="376"/>
    </location>
</feature>
<feature type="helix" evidence="4">
    <location>
        <begin position="381"/>
        <end position="393"/>
    </location>
</feature>
<name>PDUW_KLEP7</name>
<keyword id="KW-0002">3D-structure</keyword>
<keyword id="KW-0067">ATP-binding</keyword>
<keyword id="KW-0963">Cytoplasm</keyword>
<keyword id="KW-0418">Kinase</keyword>
<keyword id="KW-0547">Nucleotide-binding</keyword>
<keyword id="KW-0808">Transferase</keyword>
<reference key="1">
    <citation type="submission" date="2006-09" db="EMBL/GenBank/DDBJ databases">
        <authorList>
            <consortium name="The Klebsiella pneumonia Genome Sequencing Project"/>
            <person name="McClelland M."/>
            <person name="Sanderson E.K."/>
            <person name="Spieth J."/>
            <person name="Clifton W.S."/>
            <person name="Latreille P."/>
            <person name="Sabo A."/>
            <person name="Pepin K."/>
            <person name="Bhonagiri V."/>
            <person name="Porwollik S."/>
            <person name="Ali J."/>
            <person name="Wilson R.K."/>
        </authorList>
    </citation>
    <scope>NUCLEOTIDE SEQUENCE [LARGE SCALE GENOMIC DNA]</scope>
    <source>
        <strain>ATCC 700721 / MGH 78578</strain>
    </source>
</reference>
<proteinExistence type="evidence at protein level"/>
<comment type="function">
    <text evidence="1">Works with phosphate acetyltransferase (pta) to capture exogenous propionate and regenerate propionyl-CoA during degradation of 1,2-propanediol (1,2-PD).</text>
</comment>
<comment type="catalytic activity">
    <reaction evidence="2">
        <text>propanoate + ATP = propanoyl phosphate + ADP</text>
        <dbReference type="Rhea" id="RHEA:23148"/>
        <dbReference type="ChEBI" id="CHEBI:17272"/>
        <dbReference type="ChEBI" id="CHEBI:30616"/>
        <dbReference type="ChEBI" id="CHEBI:58933"/>
        <dbReference type="ChEBI" id="CHEBI:456216"/>
        <dbReference type="EC" id="2.7.2.15"/>
    </reaction>
</comment>
<comment type="pathway">
    <text evidence="1 3">Polyol metabolism; 1,2-propanediol degradation.</text>
</comment>
<comment type="subcellular location">
    <subcellularLocation>
        <location evidence="2">Cytoplasm</location>
    </subcellularLocation>
</comment>
<comment type="similarity">
    <text evidence="2">Belongs to the acetokinase family. PduW subfamily.</text>
</comment>
<dbReference type="EC" id="2.7.2.15" evidence="2"/>
<dbReference type="EMBL" id="CP000647">
    <property type="protein sequence ID" value="ABR78620.1"/>
    <property type="molecule type" value="Genomic_DNA"/>
</dbReference>
<dbReference type="RefSeq" id="WP_015958924.1">
    <property type="nucleotide sequence ID" value="NC_009648.1"/>
</dbReference>
<dbReference type="PDB" id="7FJ7">
    <property type="method" value="X-ray"/>
    <property type="resolution" value="2.50 A"/>
    <property type="chains" value="A/B=1-404"/>
</dbReference>
<dbReference type="PDB" id="7FJ8">
    <property type="method" value="X-ray"/>
    <property type="resolution" value="2.10 A"/>
    <property type="chains" value="A/B=1-404"/>
</dbReference>
<dbReference type="PDB" id="7FJ9">
    <property type="method" value="X-ray"/>
    <property type="resolution" value="2.30 A"/>
    <property type="chains" value="A/B=1-404"/>
</dbReference>
<dbReference type="PDB" id="7FJA">
    <property type="method" value="X-ray"/>
    <property type="resolution" value="2.20 A"/>
    <property type="chains" value="A/B=1-404"/>
</dbReference>
<dbReference type="PDB" id="7FJB">
    <property type="method" value="X-ray"/>
    <property type="resolution" value="2.44 A"/>
    <property type="chains" value="A/B=1-404"/>
</dbReference>
<dbReference type="PDBsum" id="7FJ7"/>
<dbReference type="PDBsum" id="7FJ8"/>
<dbReference type="PDBsum" id="7FJ9"/>
<dbReference type="PDBsum" id="7FJA"/>
<dbReference type="PDBsum" id="7FJB"/>
<dbReference type="SMR" id="A6TDE9"/>
<dbReference type="STRING" id="272620.KPN_03222"/>
<dbReference type="PaxDb" id="272620-KPN_03222"/>
<dbReference type="EnsemblBacteria" id="ABR78620">
    <property type="protein sequence ID" value="ABR78620"/>
    <property type="gene ID" value="KPN_03222"/>
</dbReference>
<dbReference type="KEGG" id="kpn:KPN_03222"/>
<dbReference type="HOGENOM" id="CLU_020352_0_1_6"/>
<dbReference type="UniPathway" id="UPA00621"/>
<dbReference type="Proteomes" id="UP000000265">
    <property type="component" value="Chromosome"/>
</dbReference>
<dbReference type="GO" id="GO:0005737">
    <property type="term" value="C:cytoplasm"/>
    <property type="evidence" value="ECO:0007669"/>
    <property type="project" value="UniProtKB-SubCell"/>
</dbReference>
<dbReference type="GO" id="GO:0008776">
    <property type="term" value="F:acetate kinase activity"/>
    <property type="evidence" value="ECO:0007669"/>
    <property type="project" value="TreeGrafter"/>
</dbReference>
<dbReference type="GO" id="GO:0005524">
    <property type="term" value="F:ATP binding"/>
    <property type="evidence" value="ECO:0007669"/>
    <property type="project" value="UniProtKB-KW"/>
</dbReference>
<dbReference type="GO" id="GO:0008980">
    <property type="term" value="F:propionate kinase activity"/>
    <property type="evidence" value="ECO:0007669"/>
    <property type="project" value="UniProtKB-UniRule"/>
</dbReference>
<dbReference type="GO" id="GO:0006083">
    <property type="term" value="P:acetate metabolic process"/>
    <property type="evidence" value="ECO:0007669"/>
    <property type="project" value="TreeGrafter"/>
</dbReference>
<dbReference type="GO" id="GO:0051144">
    <property type="term" value="P:propanediol catabolic process"/>
    <property type="evidence" value="ECO:0007669"/>
    <property type="project" value="UniProtKB-UniPathway"/>
</dbReference>
<dbReference type="GO" id="GO:0019543">
    <property type="term" value="P:propionate catabolic process"/>
    <property type="evidence" value="ECO:0007669"/>
    <property type="project" value="InterPro"/>
</dbReference>
<dbReference type="CDD" id="cd24010">
    <property type="entry name" value="ASKHA_NBD_AcK_PK"/>
    <property type="match status" value="1"/>
</dbReference>
<dbReference type="Gene3D" id="3.30.420.40">
    <property type="match status" value="2"/>
</dbReference>
<dbReference type="HAMAP" id="MF_00020">
    <property type="entry name" value="Acetate_kinase"/>
    <property type="match status" value="1"/>
</dbReference>
<dbReference type="HAMAP" id="MF_01882">
    <property type="entry name" value="Propion_kin_subfam2"/>
    <property type="match status" value="1"/>
</dbReference>
<dbReference type="InterPro" id="IPR004372">
    <property type="entry name" value="Ac/propionate_kinase"/>
</dbReference>
<dbReference type="InterPro" id="IPR000890">
    <property type="entry name" value="Aliphatic_acid_kin_short-chain"/>
</dbReference>
<dbReference type="InterPro" id="IPR023865">
    <property type="entry name" value="Aliphatic_acid_kinase_CS"/>
</dbReference>
<dbReference type="InterPro" id="IPR043129">
    <property type="entry name" value="ATPase_NBD"/>
</dbReference>
<dbReference type="InterPro" id="IPR024896">
    <property type="entry name" value="Propionate_kinase_PduW"/>
</dbReference>
<dbReference type="NCBIfam" id="TIGR00016">
    <property type="entry name" value="ackA"/>
    <property type="match status" value="1"/>
</dbReference>
<dbReference type="NCBIfam" id="NF009063">
    <property type="entry name" value="PRK12397.1"/>
    <property type="match status" value="1"/>
</dbReference>
<dbReference type="PANTHER" id="PTHR21060">
    <property type="entry name" value="ACETATE KINASE"/>
    <property type="match status" value="1"/>
</dbReference>
<dbReference type="PANTHER" id="PTHR21060:SF15">
    <property type="entry name" value="ACETATE KINASE-RELATED"/>
    <property type="match status" value="1"/>
</dbReference>
<dbReference type="Pfam" id="PF00871">
    <property type="entry name" value="Acetate_kinase"/>
    <property type="match status" value="1"/>
</dbReference>
<dbReference type="PIRSF" id="PIRSF000722">
    <property type="entry name" value="Acetate_prop_kin"/>
    <property type="match status" value="1"/>
</dbReference>
<dbReference type="PRINTS" id="PR00471">
    <property type="entry name" value="ACETATEKNASE"/>
</dbReference>
<dbReference type="SUPFAM" id="SSF53067">
    <property type="entry name" value="Actin-like ATPase domain"/>
    <property type="match status" value="2"/>
</dbReference>
<dbReference type="PROSITE" id="PS01075">
    <property type="entry name" value="ACETATE_KINASE_1"/>
    <property type="match status" value="1"/>
</dbReference>
<dbReference type="PROSITE" id="PS01076">
    <property type="entry name" value="ACETATE_KINASE_2"/>
    <property type="match status" value="1"/>
</dbReference>
<accession>A6TDE9</accession>
<sequence>MTYKIMAINAGSSSLKFQLLNMPQGALLCQGLIERIGLPEARFTLKTSAQKWQETLPIADHHEAVTLLLEALTGRGILSSLQEIDGVGHRVAHGGERFKDAALVCDDTLREIERLAELAPLHNPVNALGIRLFRQLLPAVPAVAVFDTAFHQTLAPEAWLYPLPWRYYAELGIRRYGFHGTSHHYVSSALAEKLGVPLSALRVVSCHLGNGCSVCAIKGGQSVNTSMGFTPQSGVMMGTRSGDLDPSILPWLVEKEGKSAQQLSQLLNNESGLLGVSGVSSDYRDVEQAADAGNERAALALSLFAERIRATIGSYIMQMGGLDALIFTGGIGENSARARAAICRNLHFLGLALDDEKNQRSATFIQADNALVKVAVINTNEELMIARDVMRLALPQARELAVSA</sequence>
<evidence type="ECO:0000250" key="1">
    <source>
        <dbReference type="UniProtKB" id="P74879"/>
    </source>
</evidence>
<evidence type="ECO:0000255" key="2">
    <source>
        <dbReference type="HAMAP-Rule" id="MF_01882"/>
    </source>
</evidence>
<evidence type="ECO:0000305" key="3"/>
<evidence type="ECO:0007829" key="4">
    <source>
        <dbReference type="PDB" id="7FJ8"/>
    </source>
</evidence>
<evidence type="ECO:0007829" key="5">
    <source>
        <dbReference type="PDB" id="7FJB"/>
    </source>
</evidence>
<gene>
    <name evidence="2" type="primary">pduW</name>
    <name type="ordered locus">KPN78578_31590</name>
    <name type="ORF">KPN_03222</name>
</gene>
<organism>
    <name type="scientific">Klebsiella pneumoniae subsp. pneumoniae (strain ATCC 700721 / MGH 78578)</name>
    <dbReference type="NCBI Taxonomy" id="272620"/>
    <lineage>
        <taxon>Bacteria</taxon>
        <taxon>Pseudomonadati</taxon>
        <taxon>Pseudomonadota</taxon>
        <taxon>Gammaproteobacteria</taxon>
        <taxon>Enterobacterales</taxon>
        <taxon>Enterobacteriaceae</taxon>
        <taxon>Klebsiella/Raoultella group</taxon>
        <taxon>Klebsiella</taxon>
        <taxon>Klebsiella pneumoniae complex</taxon>
    </lineage>
</organism>
<protein>
    <recommendedName>
        <fullName evidence="2">Propionate kinase</fullName>
        <ecNumber evidence="2">2.7.2.15</ecNumber>
    </recommendedName>
</protein>